<accession>B1LLV3</accession>
<comment type="function">
    <text evidence="1">DEAD-box RNA helicase involved in RNA degradation. Has RNA-dependent ATPase activity and unwinds double-stranded RNA.</text>
</comment>
<comment type="catalytic activity">
    <reaction evidence="1">
        <text>ATP + H2O = ADP + phosphate + H(+)</text>
        <dbReference type="Rhea" id="RHEA:13065"/>
        <dbReference type="ChEBI" id="CHEBI:15377"/>
        <dbReference type="ChEBI" id="CHEBI:15378"/>
        <dbReference type="ChEBI" id="CHEBI:30616"/>
        <dbReference type="ChEBI" id="CHEBI:43474"/>
        <dbReference type="ChEBI" id="CHEBI:456216"/>
        <dbReference type="EC" id="3.6.4.13"/>
    </reaction>
</comment>
<comment type="subunit">
    <text evidence="1">Component of the RNA degradosome, which is a multiprotein complex involved in RNA processing and mRNA degradation.</text>
</comment>
<comment type="subcellular location">
    <subcellularLocation>
        <location evidence="1">Cytoplasm</location>
    </subcellularLocation>
</comment>
<comment type="similarity">
    <text evidence="1">Belongs to the DEAD box helicase family. RhlB subfamily.</text>
</comment>
<dbReference type="EC" id="3.6.4.13" evidence="1"/>
<dbReference type="EMBL" id="CP000970">
    <property type="protein sequence ID" value="ACB15806.1"/>
    <property type="molecule type" value="Genomic_DNA"/>
</dbReference>
<dbReference type="RefSeq" id="WP_000047507.1">
    <property type="nucleotide sequence ID" value="NC_010498.1"/>
</dbReference>
<dbReference type="SMR" id="B1LLV3"/>
<dbReference type="KEGG" id="ecm:EcSMS35_4144"/>
<dbReference type="HOGENOM" id="CLU_003041_1_3_6"/>
<dbReference type="Proteomes" id="UP000007011">
    <property type="component" value="Chromosome"/>
</dbReference>
<dbReference type="GO" id="GO:0005829">
    <property type="term" value="C:cytosol"/>
    <property type="evidence" value="ECO:0007669"/>
    <property type="project" value="TreeGrafter"/>
</dbReference>
<dbReference type="GO" id="GO:0005524">
    <property type="term" value="F:ATP binding"/>
    <property type="evidence" value="ECO:0007669"/>
    <property type="project" value="UniProtKB-UniRule"/>
</dbReference>
<dbReference type="GO" id="GO:0016887">
    <property type="term" value="F:ATP hydrolysis activity"/>
    <property type="evidence" value="ECO:0007669"/>
    <property type="project" value="RHEA"/>
</dbReference>
<dbReference type="GO" id="GO:0003723">
    <property type="term" value="F:RNA binding"/>
    <property type="evidence" value="ECO:0007669"/>
    <property type="project" value="UniProtKB-UniRule"/>
</dbReference>
<dbReference type="GO" id="GO:0003724">
    <property type="term" value="F:RNA helicase activity"/>
    <property type="evidence" value="ECO:0007669"/>
    <property type="project" value="UniProtKB-UniRule"/>
</dbReference>
<dbReference type="GO" id="GO:0006401">
    <property type="term" value="P:RNA catabolic process"/>
    <property type="evidence" value="ECO:0007669"/>
    <property type="project" value="UniProtKB-UniRule"/>
</dbReference>
<dbReference type="CDD" id="cd00268">
    <property type="entry name" value="DEADc"/>
    <property type="match status" value="1"/>
</dbReference>
<dbReference type="CDD" id="cd18787">
    <property type="entry name" value="SF2_C_DEAD"/>
    <property type="match status" value="1"/>
</dbReference>
<dbReference type="FunFam" id="3.40.50.300:FF:000008">
    <property type="entry name" value="ATP-dependent RNA helicase RhlB"/>
    <property type="match status" value="1"/>
</dbReference>
<dbReference type="FunFam" id="3.40.50.300:FF:000312">
    <property type="entry name" value="ATP-dependent RNA helicase RhlB"/>
    <property type="match status" value="1"/>
</dbReference>
<dbReference type="Gene3D" id="3.40.50.300">
    <property type="entry name" value="P-loop containing nucleotide triphosphate hydrolases"/>
    <property type="match status" value="2"/>
</dbReference>
<dbReference type="HAMAP" id="MF_00661">
    <property type="entry name" value="DEAD_helicase_RhlB"/>
    <property type="match status" value="1"/>
</dbReference>
<dbReference type="InterPro" id="IPR011545">
    <property type="entry name" value="DEAD/DEAH_box_helicase_dom"/>
</dbReference>
<dbReference type="InterPro" id="IPR050079">
    <property type="entry name" value="DEAD_box_RNA_helicase"/>
</dbReference>
<dbReference type="InterPro" id="IPR014001">
    <property type="entry name" value="Helicase_ATP-bd"/>
</dbReference>
<dbReference type="InterPro" id="IPR001650">
    <property type="entry name" value="Helicase_C-like"/>
</dbReference>
<dbReference type="InterPro" id="IPR027417">
    <property type="entry name" value="P-loop_NTPase"/>
</dbReference>
<dbReference type="InterPro" id="IPR000629">
    <property type="entry name" value="RNA-helicase_DEAD-box_CS"/>
</dbReference>
<dbReference type="InterPro" id="IPR023554">
    <property type="entry name" value="RNA_helicase_ATP-dep_RhlB"/>
</dbReference>
<dbReference type="InterPro" id="IPR014014">
    <property type="entry name" value="RNA_helicase_DEAD_Q_motif"/>
</dbReference>
<dbReference type="NCBIfam" id="NF003419">
    <property type="entry name" value="PRK04837.1"/>
    <property type="match status" value="1"/>
</dbReference>
<dbReference type="PANTHER" id="PTHR47959:SF10">
    <property type="entry name" value="ATP-DEPENDENT RNA HELICASE RHLB"/>
    <property type="match status" value="1"/>
</dbReference>
<dbReference type="PANTHER" id="PTHR47959">
    <property type="entry name" value="ATP-DEPENDENT RNA HELICASE RHLE-RELATED"/>
    <property type="match status" value="1"/>
</dbReference>
<dbReference type="Pfam" id="PF00270">
    <property type="entry name" value="DEAD"/>
    <property type="match status" value="1"/>
</dbReference>
<dbReference type="Pfam" id="PF00271">
    <property type="entry name" value="Helicase_C"/>
    <property type="match status" value="1"/>
</dbReference>
<dbReference type="SMART" id="SM00487">
    <property type="entry name" value="DEXDc"/>
    <property type="match status" value="1"/>
</dbReference>
<dbReference type="SMART" id="SM00490">
    <property type="entry name" value="HELICc"/>
    <property type="match status" value="1"/>
</dbReference>
<dbReference type="SUPFAM" id="SSF52540">
    <property type="entry name" value="P-loop containing nucleoside triphosphate hydrolases"/>
    <property type="match status" value="1"/>
</dbReference>
<dbReference type="PROSITE" id="PS00039">
    <property type="entry name" value="DEAD_ATP_HELICASE"/>
    <property type="match status" value="1"/>
</dbReference>
<dbReference type="PROSITE" id="PS51192">
    <property type="entry name" value="HELICASE_ATP_BIND_1"/>
    <property type="match status" value="1"/>
</dbReference>
<dbReference type="PROSITE" id="PS51194">
    <property type="entry name" value="HELICASE_CTER"/>
    <property type="match status" value="1"/>
</dbReference>
<dbReference type="PROSITE" id="PS51195">
    <property type="entry name" value="Q_MOTIF"/>
    <property type="match status" value="1"/>
</dbReference>
<evidence type="ECO:0000255" key="1">
    <source>
        <dbReference type="HAMAP-Rule" id="MF_00661"/>
    </source>
</evidence>
<evidence type="ECO:0000256" key="2">
    <source>
        <dbReference type="SAM" id="MobiDB-lite"/>
    </source>
</evidence>
<organism>
    <name type="scientific">Escherichia coli (strain SMS-3-5 / SECEC)</name>
    <dbReference type="NCBI Taxonomy" id="439855"/>
    <lineage>
        <taxon>Bacteria</taxon>
        <taxon>Pseudomonadati</taxon>
        <taxon>Pseudomonadota</taxon>
        <taxon>Gammaproteobacteria</taxon>
        <taxon>Enterobacterales</taxon>
        <taxon>Enterobacteriaceae</taxon>
        <taxon>Escherichia</taxon>
    </lineage>
</organism>
<feature type="chain" id="PRO_1000131293" description="ATP-dependent RNA helicase RhlB">
    <location>
        <begin position="1"/>
        <end position="421"/>
    </location>
</feature>
<feature type="domain" description="Helicase ATP-binding" evidence="1">
    <location>
        <begin position="40"/>
        <end position="219"/>
    </location>
</feature>
<feature type="domain" description="Helicase C-terminal" evidence="1">
    <location>
        <begin position="245"/>
        <end position="390"/>
    </location>
</feature>
<feature type="region of interest" description="Disordered" evidence="2">
    <location>
        <begin position="392"/>
        <end position="421"/>
    </location>
</feature>
<feature type="short sequence motif" description="Q motif">
    <location>
        <begin position="9"/>
        <end position="37"/>
    </location>
</feature>
<feature type="short sequence motif" description="DEAD box">
    <location>
        <begin position="165"/>
        <end position="168"/>
    </location>
</feature>
<feature type="compositionally biased region" description="Low complexity" evidence="2">
    <location>
        <begin position="402"/>
        <end position="414"/>
    </location>
</feature>
<feature type="binding site" evidence="1">
    <location>
        <begin position="53"/>
        <end position="60"/>
    </location>
    <ligand>
        <name>ATP</name>
        <dbReference type="ChEBI" id="CHEBI:30616"/>
    </ligand>
</feature>
<gene>
    <name evidence="1" type="primary">rhlB</name>
    <name type="ordered locus">EcSMS35_4144</name>
</gene>
<reference key="1">
    <citation type="journal article" date="2008" name="J. Bacteriol.">
        <title>Insights into the environmental resistance gene pool from the genome sequence of the multidrug-resistant environmental isolate Escherichia coli SMS-3-5.</title>
        <authorList>
            <person name="Fricke W.F."/>
            <person name="Wright M.S."/>
            <person name="Lindell A.H."/>
            <person name="Harkins D.M."/>
            <person name="Baker-Austin C."/>
            <person name="Ravel J."/>
            <person name="Stepanauskas R."/>
        </authorList>
    </citation>
    <scope>NUCLEOTIDE SEQUENCE [LARGE SCALE GENOMIC DNA]</scope>
    <source>
        <strain>SMS-3-5 / SECEC</strain>
    </source>
</reference>
<keyword id="KW-0067">ATP-binding</keyword>
<keyword id="KW-0963">Cytoplasm</keyword>
<keyword id="KW-0347">Helicase</keyword>
<keyword id="KW-0378">Hydrolase</keyword>
<keyword id="KW-0547">Nucleotide-binding</keyword>
<keyword id="KW-0694">RNA-binding</keyword>
<protein>
    <recommendedName>
        <fullName evidence="1">ATP-dependent RNA helicase RhlB</fullName>
        <ecNumber evidence="1">3.6.4.13</ecNumber>
    </recommendedName>
</protein>
<sequence>MSKTHLTEQKFSDFALHPKVVEALEKKGFHNCTPIQALALPLTLAGRDVAGQAQTGTGKTMAFLTSTFHYLLSHPAIADRKVNQPRALIMAPTRELAVQIHADAEPLAQATGLKLGLAYGGDGYDKQLKVLESGVDILIGTTGRLIDYAKQNHINLCAIQVVVLDEADRMYDLGFIKDIRWLFRRMPPANQRLNMLFSATLSYRVRELAFEQMNNAEYIEVEPEQKTGHRIKEELFYPSNEEKMRLLQTLIEEEWPDRAIIFANTKHRCEEIWGHLAADGHRVGLLTGDVAQKKRLRILDEFTRGDLDILVATDVAARGLHIPAVTHVFNYDLPDDCEDYVHRIGRTGRAGASGHSISLACEEYALNLPAIETYIGHSIPVSKYNPDALMTDLPKPLRLTRPRTGNGPRRTGAPRNRRRSG</sequence>
<proteinExistence type="inferred from homology"/>
<name>RHLB_ECOSM</name>